<dbReference type="EMBL" id="AJ294725">
    <property type="protein sequence ID" value="CAC24614.1"/>
    <property type="molecule type" value="Genomic_DNA"/>
</dbReference>
<dbReference type="RefSeq" id="NP_075003.1">
    <property type="nucleotide sequence ID" value="NC_002652.1"/>
</dbReference>
<dbReference type="GeneID" id="1457322"/>
<dbReference type="GO" id="GO:0009536">
    <property type="term" value="C:plastid"/>
    <property type="evidence" value="ECO:0007669"/>
    <property type="project" value="UniProtKB-SubCell"/>
</dbReference>
<comment type="subcellular location">
    <subcellularLocation>
        <location>Plastid</location>
    </subcellularLocation>
</comment>
<geneLocation type="non-photosynthetic plastid"/>
<name>YCXB_EUGLO</name>
<proteinExistence type="predicted"/>
<feature type="chain" id="PRO_0000217494" description="Uncharacterized 12.4 kDa protein in rps4-rps11 intergenic region">
    <location>
        <begin position="1"/>
        <end position="104"/>
    </location>
</feature>
<feature type="region of interest" description="Disordered" evidence="1">
    <location>
        <begin position="55"/>
        <end position="104"/>
    </location>
</feature>
<protein>
    <recommendedName>
        <fullName>Uncharacterized 12.4 kDa protein in rps4-rps11 intergenic region</fullName>
    </recommendedName>
    <alternativeName>
        <fullName>ORF104</fullName>
    </alternativeName>
</protein>
<organism>
    <name type="scientific">Euglena longa</name>
    <name type="common">Euglenophycean alga</name>
    <name type="synonym">Astasia longa</name>
    <dbReference type="NCBI Taxonomy" id="3037"/>
    <lineage>
        <taxon>Eukaryota</taxon>
        <taxon>Discoba</taxon>
        <taxon>Euglenozoa</taxon>
        <taxon>Euglenida</taxon>
        <taxon>Spirocuta</taxon>
        <taxon>Euglenophyceae</taxon>
        <taxon>Euglenales</taxon>
        <taxon>Euglenaceae</taxon>
        <taxon>Euglena</taxon>
    </lineage>
</organism>
<evidence type="ECO:0000256" key="1">
    <source>
        <dbReference type="SAM" id="MobiDB-lite"/>
    </source>
</evidence>
<sequence length="104" mass="12373">MLLNLFKFSKKLFQENFNKVKLLNHCKSFLFLGESDNKFFTNEKSELVFSDKRDRPFSSDRINRPFSPDKKGEPIFPDKRDRPFSPDRINRPFSPDKKGEPIFP</sequence>
<keyword id="KW-0934">Plastid</keyword>
<accession>P58150</accession>
<reference key="1">
    <citation type="journal article" date="2000" name="Protist">
        <title>Complete gene map of the plastid genome of the nonphotosynthetic euglenoid flagellate Astasia longa.</title>
        <authorList>
            <person name="Gockel G."/>
            <person name="Hachtel W."/>
        </authorList>
    </citation>
    <scope>NUCLEOTIDE SEQUENCE [LARGE SCALE GENOMIC DNA]</scope>
    <source>
        <strain>CCAP 1204-17a</strain>
    </source>
</reference>